<organism>
    <name type="scientific">Halochromatium salexigens</name>
    <name type="common">Chromatium salexigens</name>
    <dbReference type="NCBI Taxonomy" id="49447"/>
    <lineage>
        <taxon>Bacteria</taxon>
        <taxon>Pseudomonadati</taxon>
        <taxon>Pseudomonadota</taxon>
        <taxon>Gammaproteobacteria</taxon>
        <taxon>Chromatiales</taxon>
        <taxon>Chromatiaceae</taxon>
        <taxon>Halochromatium</taxon>
    </lineage>
</organism>
<proteinExistence type="evidence at protein level"/>
<protein>
    <recommendedName>
        <fullName evidence="4">High-potential iron-sulfur protein</fullName>
        <shortName evidence="4">HiPIP</shortName>
    </recommendedName>
</protein>
<reference evidence="5" key="1">
    <citation type="journal article" date="2003" name="J. Mol. Evol.">
        <title>Amino acid sequences and distribution of high-potential iron-sulfur proteins that donate electrons to the photosynthetic reaction center in phototropic proteobacteria.</title>
        <authorList>
            <person name="Van Driessche G."/>
            <person name="Vandenberghe I."/>
            <person name="Devreese B."/>
            <person name="Samyn B."/>
            <person name="Meyer T.E."/>
            <person name="Leigh R."/>
            <person name="Cusanovich M.A."/>
            <person name="Bartsch R.G."/>
            <person name="Fischer U."/>
            <person name="Van Beeumen J.J."/>
        </authorList>
    </citation>
    <scope>PROTEIN SEQUENCE</scope>
</reference>
<sequence length="81" mass="8737">QDLPHVDPATDPTAQALKYSEDAANADRAAAARPGKPPEEQFCHNCQFVLADSGEWRPCSLFPGKAVHETGWCASWTLKAG</sequence>
<accession>B3EBZ6</accession>
<dbReference type="SMR" id="B3EBZ6"/>
<dbReference type="GO" id="GO:0042597">
    <property type="term" value="C:periplasmic space"/>
    <property type="evidence" value="ECO:0007669"/>
    <property type="project" value="UniProtKB-SubCell"/>
</dbReference>
<dbReference type="GO" id="GO:0051539">
    <property type="term" value="F:4 iron, 4 sulfur cluster binding"/>
    <property type="evidence" value="ECO:0007669"/>
    <property type="project" value="UniProtKB-KW"/>
</dbReference>
<dbReference type="GO" id="GO:0009055">
    <property type="term" value="F:electron transfer activity"/>
    <property type="evidence" value="ECO:0007669"/>
    <property type="project" value="InterPro"/>
</dbReference>
<dbReference type="GO" id="GO:0046872">
    <property type="term" value="F:metal ion binding"/>
    <property type="evidence" value="ECO:0007669"/>
    <property type="project" value="UniProtKB-KW"/>
</dbReference>
<dbReference type="GO" id="GO:0019646">
    <property type="term" value="P:aerobic electron transport chain"/>
    <property type="evidence" value="ECO:0007669"/>
    <property type="project" value="InterPro"/>
</dbReference>
<dbReference type="Gene3D" id="4.10.490.10">
    <property type="entry name" value="High potential iron-sulphur protein"/>
    <property type="match status" value="1"/>
</dbReference>
<dbReference type="InterPro" id="IPR000170">
    <property type="entry name" value="High_potential_FeS_prot"/>
</dbReference>
<dbReference type="InterPro" id="IPR036369">
    <property type="entry name" value="HIPIP_sf"/>
</dbReference>
<dbReference type="Pfam" id="PF01355">
    <property type="entry name" value="HIPIP"/>
    <property type="match status" value="1"/>
</dbReference>
<dbReference type="SUPFAM" id="SSF57652">
    <property type="entry name" value="HIPIP (high potential iron protein)"/>
    <property type="match status" value="1"/>
</dbReference>
<dbReference type="PROSITE" id="PS51373">
    <property type="entry name" value="HIPIP"/>
    <property type="match status" value="1"/>
</dbReference>
<feature type="chain" id="PRO_0000415402" description="High-potential iron-sulfur protein">
    <location>
        <begin position="1"/>
        <end position="81"/>
    </location>
</feature>
<feature type="binding site" evidence="1 3">
    <location>
        <position position="43"/>
    </location>
    <ligand>
        <name>[4Fe-4S] cluster</name>
        <dbReference type="ChEBI" id="CHEBI:49883"/>
    </ligand>
</feature>
<feature type="binding site" evidence="1 3">
    <location>
        <position position="46"/>
    </location>
    <ligand>
        <name>[4Fe-4S] cluster</name>
        <dbReference type="ChEBI" id="CHEBI:49883"/>
    </ligand>
</feature>
<feature type="binding site" evidence="1 3">
    <location>
        <position position="59"/>
    </location>
    <ligand>
        <name>[4Fe-4S] cluster</name>
        <dbReference type="ChEBI" id="CHEBI:49883"/>
    </ligand>
</feature>
<feature type="binding site" evidence="1 3">
    <location>
        <position position="73"/>
    </location>
    <ligand>
        <name>[4Fe-4S] cluster</name>
        <dbReference type="ChEBI" id="CHEBI:49883"/>
    </ligand>
</feature>
<name>HIP_HALSE</name>
<keyword id="KW-0004">4Fe-4S</keyword>
<keyword id="KW-0903">Direct protein sequencing</keyword>
<keyword id="KW-0249">Electron transport</keyword>
<keyword id="KW-0408">Iron</keyword>
<keyword id="KW-0411">Iron-sulfur</keyword>
<keyword id="KW-0479">Metal-binding</keyword>
<keyword id="KW-0574">Periplasm</keyword>
<keyword id="KW-0813">Transport</keyword>
<evidence type="ECO:0000250" key="1">
    <source>
        <dbReference type="UniProtKB" id="P00260"/>
    </source>
</evidence>
<evidence type="ECO:0000250" key="2">
    <source>
        <dbReference type="UniProtKB" id="P59860"/>
    </source>
</evidence>
<evidence type="ECO:0000255" key="3">
    <source>
        <dbReference type="PROSITE-ProRule" id="PRU00705"/>
    </source>
</evidence>
<evidence type="ECO:0000303" key="4">
    <source>
    </source>
</evidence>
<evidence type="ECO:0000305" key="5"/>
<comment type="function">
    <text evidence="1 3">Specific class of high-redox-potential 4Fe-4S ferredoxins. Functions in anaerobic electron transport in most purple and in some other photosynthetic bacteria and in at least one genus (Paracoccus) of halophilic, denitrifying bacteria.</text>
</comment>
<comment type="subunit">
    <text evidence="2">Homodimer.</text>
</comment>
<comment type="subcellular location">
    <subcellularLocation>
        <location evidence="1 3">Periplasm</location>
    </subcellularLocation>
</comment>
<comment type="similarity">
    <text evidence="3">Belongs to the high-potential iron-sulfur protein (HiPIP) family.</text>
</comment>